<dbReference type="EC" id="3.1.3.5" evidence="1"/>
<dbReference type="EMBL" id="CP000152">
    <property type="protein sequence ID" value="ABB13013.1"/>
    <property type="molecule type" value="Genomic_DNA"/>
</dbReference>
<dbReference type="RefSeq" id="WP_011356492.1">
    <property type="nucleotide sequence ID" value="NC_007511.1"/>
</dbReference>
<dbReference type="SMR" id="Q390V3"/>
<dbReference type="GeneID" id="45099206"/>
<dbReference type="KEGG" id="bur:Bcep18194_B2902"/>
<dbReference type="PATRIC" id="fig|482957.22.peg.6721"/>
<dbReference type="HOGENOM" id="CLU_045192_1_2_4"/>
<dbReference type="Proteomes" id="UP000002705">
    <property type="component" value="Chromosome 2"/>
</dbReference>
<dbReference type="GO" id="GO:0005737">
    <property type="term" value="C:cytoplasm"/>
    <property type="evidence" value="ECO:0007669"/>
    <property type="project" value="UniProtKB-SubCell"/>
</dbReference>
<dbReference type="GO" id="GO:0008254">
    <property type="term" value="F:3'-nucleotidase activity"/>
    <property type="evidence" value="ECO:0007669"/>
    <property type="project" value="TreeGrafter"/>
</dbReference>
<dbReference type="GO" id="GO:0008253">
    <property type="term" value="F:5'-nucleotidase activity"/>
    <property type="evidence" value="ECO:0007669"/>
    <property type="project" value="UniProtKB-UniRule"/>
</dbReference>
<dbReference type="GO" id="GO:0004309">
    <property type="term" value="F:exopolyphosphatase activity"/>
    <property type="evidence" value="ECO:0007669"/>
    <property type="project" value="TreeGrafter"/>
</dbReference>
<dbReference type="GO" id="GO:0046872">
    <property type="term" value="F:metal ion binding"/>
    <property type="evidence" value="ECO:0007669"/>
    <property type="project" value="UniProtKB-UniRule"/>
</dbReference>
<dbReference type="GO" id="GO:0000166">
    <property type="term" value="F:nucleotide binding"/>
    <property type="evidence" value="ECO:0007669"/>
    <property type="project" value="UniProtKB-KW"/>
</dbReference>
<dbReference type="Gene3D" id="3.40.1210.10">
    <property type="entry name" value="Survival protein SurE-like phosphatase/nucleotidase"/>
    <property type="match status" value="1"/>
</dbReference>
<dbReference type="HAMAP" id="MF_00060">
    <property type="entry name" value="SurE"/>
    <property type="match status" value="1"/>
</dbReference>
<dbReference type="InterPro" id="IPR030048">
    <property type="entry name" value="SurE"/>
</dbReference>
<dbReference type="InterPro" id="IPR002828">
    <property type="entry name" value="SurE-like_Pase/nucleotidase"/>
</dbReference>
<dbReference type="InterPro" id="IPR036523">
    <property type="entry name" value="SurE-like_sf"/>
</dbReference>
<dbReference type="NCBIfam" id="NF001490">
    <property type="entry name" value="PRK00346.1-4"/>
    <property type="match status" value="1"/>
</dbReference>
<dbReference type="NCBIfam" id="TIGR00087">
    <property type="entry name" value="surE"/>
    <property type="match status" value="1"/>
</dbReference>
<dbReference type="PANTHER" id="PTHR30457">
    <property type="entry name" value="5'-NUCLEOTIDASE SURE"/>
    <property type="match status" value="1"/>
</dbReference>
<dbReference type="PANTHER" id="PTHR30457:SF12">
    <property type="entry name" value="5'_3'-NUCLEOTIDASE SURE"/>
    <property type="match status" value="1"/>
</dbReference>
<dbReference type="Pfam" id="PF01975">
    <property type="entry name" value="SurE"/>
    <property type="match status" value="1"/>
</dbReference>
<dbReference type="SUPFAM" id="SSF64167">
    <property type="entry name" value="SurE-like"/>
    <property type="match status" value="1"/>
</dbReference>
<comment type="function">
    <text evidence="1">Nucleotidase that shows phosphatase activity on nucleoside 5'-monophosphates.</text>
</comment>
<comment type="catalytic activity">
    <reaction evidence="1">
        <text>a ribonucleoside 5'-phosphate + H2O = a ribonucleoside + phosphate</text>
        <dbReference type="Rhea" id="RHEA:12484"/>
        <dbReference type="ChEBI" id="CHEBI:15377"/>
        <dbReference type="ChEBI" id="CHEBI:18254"/>
        <dbReference type="ChEBI" id="CHEBI:43474"/>
        <dbReference type="ChEBI" id="CHEBI:58043"/>
        <dbReference type="EC" id="3.1.3.5"/>
    </reaction>
</comment>
<comment type="cofactor">
    <cofactor evidence="1">
        <name>a divalent metal cation</name>
        <dbReference type="ChEBI" id="CHEBI:60240"/>
    </cofactor>
    <text evidence="1">Binds 1 divalent metal cation per subunit.</text>
</comment>
<comment type="subcellular location">
    <subcellularLocation>
        <location evidence="1">Cytoplasm</location>
    </subcellularLocation>
</comment>
<comment type="similarity">
    <text evidence="1">Belongs to the SurE nucleotidase family.</text>
</comment>
<evidence type="ECO:0000255" key="1">
    <source>
        <dbReference type="HAMAP-Rule" id="MF_00060"/>
    </source>
</evidence>
<gene>
    <name evidence="1" type="primary">surE1</name>
    <name type="ordered locus">Bcep18194_B2902</name>
</gene>
<proteinExistence type="inferred from homology"/>
<protein>
    <recommendedName>
        <fullName evidence="1">5'-nucleotidase SurE 1</fullName>
        <ecNumber evidence="1">3.1.3.5</ecNumber>
    </recommendedName>
    <alternativeName>
        <fullName evidence="1">Nucleoside 5'-monophosphate phosphohydrolase 1</fullName>
    </alternativeName>
</protein>
<organism>
    <name type="scientific">Burkholderia lata (strain ATCC 17760 / DSM 23089 / LMG 22485 / NCIMB 9086 / R18194 / 383)</name>
    <dbReference type="NCBI Taxonomy" id="482957"/>
    <lineage>
        <taxon>Bacteria</taxon>
        <taxon>Pseudomonadati</taxon>
        <taxon>Pseudomonadota</taxon>
        <taxon>Betaproteobacteria</taxon>
        <taxon>Burkholderiales</taxon>
        <taxon>Burkholderiaceae</taxon>
        <taxon>Burkholderia</taxon>
        <taxon>Burkholderia cepacia complex</taxon>
    </lineage>
</organism>
<name>SURE1_BURL3</name>
<feature type="chain" id="PRO_0000235600" description="5'-nucleotidase SurE 1">
    <location>
        <begin position="1"/>
        <end position="259"/>
    </location>
</feature>
<feature type="binding site" evidence="1">
    <location>
        <position position="16"/>
    </location>
    <ligand>
        <name>a divalent metal cation</name>
        <dbReference type="ChEBI" id="CHEBI:60240"/>
    </ligand>
</feature>
<feature type="binding site" evidence="1">
    <location>
        <position position="17"/>
    </location>
    <ligand>
        <name>a divalent metal cation</name>
        <dbReference type="ChEBI" id="CHEBI:60240"/>
    </ligand>
</feature>
<feature type="binding site" evidence="1">
    <location>
        <position position="48"/>
    </location>
    <ligand>
        <name>a divalent metal cation</name>
        <dbReference type="ChEBI" id="CHEBI:60240"/>
    </ligand>
</feature>
<feature type="binding site" evidence="1">
    <location>
        <position position="101"/>
    </location>
    <ligand>
        <name>a divalent metal cation</name>
        <dbReference type="ChEBI" id="CHEBI:60240"/>
    </ligand>
</feature>
<reference key="1">
    <citation type="submission" date="2005-10" db="EMBL/GenBank/DDBJ databases">
        <title>Complete sequence of chromosome 2 of Burkholderia sp. 383.</title>
        <authorList>
            <consortium name="US DOE Joint Genome Institute"/>
            <person name="Copeland A."/>
            <person name="Lucas S."/>
            <person name="Lapidus A."/>
            <person name="Barry K."/>
            <person name="Detter J.C."/>
            <person name="Glavina T."/>
            <person name="Hammon N."/>
            <person name="Israni S."/>
            <person name="Pitluck S."/>
            <person name="Chain P."/>
            <person name="Malfatti S."/>
            <person name="Shin M."/>
            <person name="Vergez L."/>
            <person name="Schmutz J."/>
            <person name="Larimer F."/>
            <person name="Land M."/>
            <person name="Kyrpides N."/>
            <person name="Lykidis A."/>
            <person name="Richardson P."/>
        </authorList>
    </citation>
    <scope>NUCLEOTIDE SEQUENCE [LARGE SCALE GENOMIC DNA]</scope>
    <source>
        <strain>ATCC 17760 / DSM 23089 / LMG 22485 / NCIMB 9086 / R18194 / 383</strain>
    </source>
</reference>
<accession>Q390V3</accession>
<sequence>MQETRPLFDRVLLTNDDGIDAPGLDVLEQVATQLAREVWIVAPAEDQSGTSHSLSLHEPLRVHRKGDRRFAVRGTPGDCVAIAISHLMKDARPDIVLSGVNRGGNLGTETVFSGTVGAAMTSMLVGVPAIALSQAFTDRNAVPWDTALALAPDVIRRLVAAGWDSDACLNVNFPPRPAQDVRGLKVTNQGAGTLQGVEIVSGRDPRDIEYHWLKLARAPRDDDADSETVALGEGYVAVTPLKFERTHDQALARLRTSLG</sequence>
<keyword id="KW-0963">Cytoplasm</keyword>
<keyword id="KW-0378">Hydrolase</keyword>
<keyword id="KW-0479">Metal-binding</keyword>
<keyword id="KW-0547">Nucleotide-binding</keyword>